<sequence>MADDDTTARRPVLSSFGTLGRGWLGVLALLLVIGLGAWAYQLQHGLIETGMRNVFSWGLYIMLFVLFVGLSAGGLILSSAPKFFHSQRYEGFARLGVLVSLGCIIVAGLLILPDIGRPDRIYQFVTSPDFRSPMVWDFGIVMLYGALNVWYLWLLTRRDLAARGSRLSLWVSDSAAGRDRDRTLMFWTAVCALPAAVALHSVTGWIFATQVGRGDWFSPLVAPVFIAKALVSGLGLLLVVSILADRFTAFTADRGELTSLGKLLGIFLAFHVVYLLAAERLPHAWAHHFGFWAITSNFLIGDTVYFWLWTGLGGAVPLLLLATPSLRRRTAVIFTASVLAVFGTLFEGIRLVFTGYQRVNINAAPGIATGGEYAGLTTDAWATAGTYTPTAVEIAVTVGVISIGALIVMAGLRYLPLQRAAPDAAYATDGGDRTQ</sequence>
<dbReference type="EMBL" id="AE004437">
    <property type="protein sequence ID" value="AAG19286.1"/>
    <property type="molecule type" value="Genomic_DNA"/>
</dbReference>
<dbReference type="PIR" id="B84240">
    <property type="entry name" value="B84240"/>
</dbReference>
<dbReference type="SMR" id="Q9HR72"/>
<dbReference type="STRING" id="64091.VNG_0831G"/>
<dbReference type="TCDB" id="5.A.3.3.3">
    <property type="family name" value="the prokaryotic molybdopterin-containing oxidoreductase (pmo) family"/>
</dbReference>
<dbReference type="PaxDb" id="64091-VNG_0831G"/>
<dbReference type="KEGG" id="hal:VNG_0831G"/>
<dbReference type="PATRIC" id="fig|64091.14.peg.639"/>
<dbReference type="HOGENOM" id="CLU_021295_1_0_2"/>
<dbReference type="InParanoid" id="Q9HR72"/>
<dbReference type="OrthoDB" id="266751at2157"/>
<dbReference type="PhylomeDB" id="Q9HR72"/>
<dbReference type="Proteomes" id="UP000000554">
    <property type="component" value="Chromosome"/>
</dbReference>
<dbReference type="GO" id="GO:0005886">
    <property type="term" value="C:plasma membrane"/>
    <property type="evidence" value="ECO:0000318"/>
    <property type="project" value="GO_Central"/>
</dbReference>
<dbReference type="Gene3D" id="1.20.1630.10">
    <property type="entry name" value="Formate dehydrogenase/DMSO reductase domain"/>
    <property type="match status" value="1"/>
</dbReference>
<dbReference type="InterPro" id="IPR052049">
    <property type="entry name" value="Electron_transfer_protein"/>
</dbReference>
<dbReference type="InterPro" id="IPR005614">
    <property type="entry name" value="NrfD-like"/>
</dbReference>
<dbReference type="PANTHER" id="PTHR34856">
    <property type="entry name" value="PROTEIN NRFD"/>
    <property type="match status" value="1"/>
</dbReference>
<dbReference type="PANTHER" id="PTHR34856:SF2">
    <property type="entry name" value="PROTEIN NRFD"/>
    <property type="match status" value="1"/>
</dbReference>
<dbReference type="Pfam" id="PF03916">
    <property type="entry name" value="NrfD"/>
    <property type="match status" value="1"/>
</dbReference>
<evidence type="ECO:0000255" key="1"/>
<evidence type="ECO:0000269" key="2">
    <source>
    </source>
</evidence>
<evidence type="ECO:0000305" key="3"/>
<protein>
    <recommendedName>
        <fullName>Putative dimethyl sulfoxide reductase membrane subunit C</fullName>
        <shortName>DMSO reductase subunit C</shortName>
    </recommendedName>
</protein>
<keyword id="KW-1003">Cell membrane</keyword>
<keyword id="KW-0472">Membrane</keyword>
<keyword id="KW-1185">Reference proteome</keyword>
<keyword id="KW-0812">Transmembrane</keyword>
<keyword id="KW-1133">Transmembrane helix</keyword>
<gene>
    <name type="primary">dmsC</name>
    <name type="synonym">moz</name>
    <name type="ordered locus">VNG_0831G</name>
</gene>
<comment type="function">
    <text>Dimethyl sulfoxide (DMSO) reductase catalyzes the reduction of dimethyl sulfoxide (DMSO) to dimethyl sulfide (DMS) during anaerobic respiration; it can also use trimethylamine N-oxide (TMAO) as terminal electron acceptor. Subunit C is proposed to be a membrane anchoring subunit.</text>
</comment>
<comment type="subunit">
    <text>Probable multiprotein complex that likely consists of DmsA, DmsB and DmsC.</text>
</comment>
<comment type="subcellular location">
    <subcellularLocation>
        <location evidence="3">Cell membrane</location>
        <topology evidence="3">Multi-pass membrane protein</topology>
    </subcellularLocation>
</comment>
<comment type="induction">
    <text evidence="2">By anaerobic conditions. Its expression is under the control of DmsR.</text>
</comment>
<comment type="similarity">
    <text evidence="3">Belongs to the NrfD family.</text>
</comment>
<organism>
    <name type="scientific">Halobacterium salinarum (strain ATCC 700922 / JCM 11081 / NRC-1)</name>
    <name type="common">Halobacterium halobium</name>
    <dbReference type="NCBI Taxonomy" id="64091"/>
    <lineage>
        <taxon>Archaea</taxon>
        <taxon>Methanobacteriati</taxon>
        <taxon>Methanobacteriota</taxon>
        <taxon>Stenosarchaea group</taxon>
        <taxon>Halobacteria</taxon>
        <taxon>Halobacteriales</taxon>
        <taxon>Halobacteriaceae</taxon>
        <taxon>Halobacterium</taxon>
        <taxon>Halobacterium salinarum NRC-34001</taxon>
    </lineage>
</organism>
<feature type="chain" id="PRO_0000428976" description="Putative dimethyl sulfoxide reductase membrane subunit C">
    <location>
        <begin position="1"/>
        <end position="435"/>
    </location>
</feature>
<feature type="transmembrane region" description="Helical" evidence="1">
    <location>
        <begin position="22"/>
        <end position="42"/>
    </location>
</feature>
<feature type="transmembrane region" description="Helical" evidence="1">
    <location>
        <begin position="57"/>
        <end position="77"/>
    </location>
</feature>
<feature type="transmembrane region" description="Helical" evidence="1">
    <location>
        <begin position="95"/>
        <end position="115"/>
    </location>
</feature>
<feature type="transmembrane region" description="Helical" evidence="1">
    <location>
        <begin position="135"/>
        <end position="155"/>
    </location>
</feature>
<feature type="transmembrane region" description="Helical" evidence="1">
    <location>
        <begin position="186"/>
        <end position="206"/>
    </location>
</feature>
<feature type="transmembrane region" description="Helical" evidence="1">
    <location>
        <begin position="220"/>
        <end position="240"/>
    </location>
</feature>
<feature type="transmembrane region" description="Helical" evidence="1">
    <location>
        <begin position="257"/>
        <end position="277"/>
    </location>
</feature>
<feature type="transmembrane region" description="Helical" evidence="1">
    <location>
        <begin position="281"/>
        <end position="301"/>
    </location>
</feature>
<feature type="transmembrane region" description="Helical" evidence="1">
    <location>
        <begin position="304"/>
        <end position="324"/>
    </location>
</feature>
<feature type="transmembrane region" description="Helical" evidence="1">
    <location>
        <begin position="333"/>
        <end position="353"/>
    </location>
</feature>
<feature type="transmembrane region" description="Helical" evidence="1">
    <location>
        <begin position="392"/>
        <end position="412"/>
    </location>
</feature>
<reference key="1">
    <citation type="journal article" date="2000" name="Proc. Natl. Acad. Sci. U.S.A.">
        <title>Genome sequence of Halobacterium species NRC-1.</title>
        <authorList>
            <person name="Ng W.V."/>
            <person name="Kennedy S.P."/>
            <person name="Mahairas G.G."/>
            <person name="Berquist B."/>
            <person name="Pan M."/>
            <person name="Shukla H.D."/>
            <person name="Lasky S.R."/>
            <person name="Baliga N.S."/>
            <person name="Thorsson V."/>
            <person name="Sbrogna J."/>
            <person name="Swartzell S."/>
            <person name="Weir D."/>
            <person name="Hall J."/>
            <person name="Dahl T.A."/>
            <person name="Welti R."/>
            <person name="Goo Y.A."/>
            <person name="Leithauser B."/>
            <person name="Keller K."/>
            <person name="Cruz R."/>
            <person name="Danson M.J."/>
            <person name="Hough D.W."/>
            <person name="Maddocks D.G."/>
            <person name="Jablonski P.E."/>
            <person name="Krebs M.P."/>
            <person name="Angevine C.M."/>
            <person name="Dale H."/>
            <person name="Isenbarger T.A."/>
            <person name="Peck R.F."/>
            <person name="Pohlschroder M."/>
            <person name="Spudich J.L."/>
            <person name="Jung K.-H."/>
            <person name="Alam M."/>
            <person name="Freitas T."/>
            <person name="Hou S."/>
            <person name="Daniels C.J."/>
            <person name="Dennis P.P."/>
            <person name="Omer A.D."/>
            <person name="Ebhardt H."/>
            <person name="Lowe T.M."/>
            <person name="Liang P."/>
            <person name="Riley M."/>
            <person name="Hood L."/>
            <person name="DasSarma S."/>
        </authorList>
    </citation>
    <scope>NUCLEOTIDE SEQUENCE [LARGE SCALE GENOMIC DNA]</scope>
    <source>
        <strain>ATCC 700922 / JCM 11081 / NRC-1</strain>
    </source>
</reference>
<reference key="2">
    <citation type="journal article" date="2005" name="J. Bacteriol.">
        <title>Genomic analysis of anaerobic respiration in the archaeon Halobacterium sp. strain NRC-1: dimethyl sulfoxide and trimethylamine N-oxide as terminal electron acceptors.</title>
        <authorList>
            <person name="Muller J.A."/>
            <person name="DasSarma S."/>
        </authorList>
    </citation>
    <scope>PUTATIVE FUNCTION</scope>
    <scope>INDUCTION</scope>
    <source>
        <strain>ATCC 700922 / JCM 11081 / NRC-1</strain>
    </source>
</reference>
<name>DMSC_HALSA</name>
<proteinExistence type="evidence at transcript level"/>
<accession>Q9HR72</accession>